<gene>
    <name evidence="6" type="primary">gvpH</name>
    <name type="ordered locus">HFX_1701</name>
</gene>
<organism>
    <name type="scientific">Haloferax mediterranei (strain ATCC 33500 / DSM 1411 / JCM 8866 / NBRC 14739 / NCIMB 2177 / R-4)</name>
    <name type="common">Halobacterium mediterranei</name>
    <dbReference type="NCBI Taxonomy" id="523841"/>
    <lineage>
        <taxon>Archaea</taxon>
        <taxon>Methanobacteriati</taxon>
        <taxon>Methanobacteriota</taxon>
        <taxon>Stenosarchaea group</taxon>
        <taxon>Halobacteria</taxon>
        <taxon>Halobacteriales</taxon>
        <taxon>Haloferacaceae</taxon>
        <taxon>Haloferax</taxon>
    </lineage>
</organism>
<comment type="function">
    <text evidence="1 2">Proteins GvpF to GvpM might be involved in nucleating gas vesicle formation (By similarity). A minor component of the gas vesicle (By similarity). Gas vesicles are hollow, gas filled proteinaceous nanostructures found in some microorganisms. They allow positioning of halobacteria at the optimal depth for growth in the poorly aerated, shallow brine pools of their habitat (By similarity).</text>
</comment>
<comment type="function">
    <text evidence="4 5">Expression of a 9.5 kb mc-vac DNA fragment containing 2 divergently transcribed regions (gvpD-gvpE-gvpF-gvpG-gvpH-gvpI-gvpJ-gvpK-gvpL-gvpM and gvpA-gvpC-gvpN-gvpO) allows H.volcanii to produce gas vesicles.</text>
</comment>
<comment type="subunit">
    <text evidence="1">GvpF to GvpM interact with each other in vitro, and may form multi-subunit complex(es). Interacts with GvpC. Might interact with GvpA.</text>
</comment>
<comment type="subcellular location">
    <subcellularLocation>
        <location evidence="2">Gas vesicle</location>
    </subcellularLocation>
</comment>
<comment type="induction">
    <text evidence="4 5">Transcribed from early-log phase, decreases as cells enter stationary phase, probably as a long gvpF-gvpM RNA (PubMed:1404376). Highly expressed in 25% salt, poorly expressed in 15% salt, no gas vesicles are formed at 15% salt (PubMed:8757736).</text>
</comment>
<comment type="miscellaneous">
    <text evidence="4">Encoded in a 14-gene locus called mc-vac.</text>
</comment>
<comment type="similarity">
    <text evidence="7">Belongs to the gas vesicle GvpH family.</text>
</comment>
<name>GVPH_HALMT</name>
<proteinExistence type="evidence at transcript level"/>
<reference key="1">
    <citation type="journal article" date="1992" name="J. Mol. Biol.">
        <title>Three different but related gene clusters encoding gas vesicles in halophilic archaea.</title>
        <authorList>
            <person name="Englert C."/>
            <person name="Krueger K."/>
            <person name="Offner S."/>
            <person name="Pfeifer F."/>
        </authorList>
    </citation>
    <scope>NUCLEOTIDE SEQUENCE [GENOMIC DNA]</scope>
    <scope>INDUCTION</scope>
    <scope>GAS VESICLE GENE CLUSTER</scope>
    <source>
        <strain>ATCC 33500 / DSM 1411 / JCM 8866 / NBRC 14739 / NCIMB 2177 / R-4</strain>
    </source>
</reference>
<reference key="2">
    <citation type="journal article" date="2012" name="J. Bacteriol.">
        <title>Complete genome sequence of the metabolically versatile halophilic archaeon Haloferax mediterranei, a poly(3-hydroxybutyrate-co-3-hydroxyvalerate) producer.</title>
        <authorList>
            <person name="Han J."/>
            <person name="Zhang F."/>
            <person name="Hou J."/>
            <person name="Liu X."/>
            <person name="Li M."/>
            <person name="Liu H."/>
            <person name="Cai L."/>
            <person name="Zhang B."/>
            <person name="Chen Y."/>
            <person name="Zhou J."/>
            <person name="Hu S."/>
            <person name="Xiang H."/>
        </authorList>
    </citation>
    <scope>NUCLEOTIDE SEQUENCE [LARGE SCALE GENOMIC DNA]</scope>
    <source>
        <strain>ATCC 33500 / DSM 1411 / JCM 8866 / NBRC 14739 / NCIMB 2177 / R-4</strain>
    </source>
</reference>
<reference key="3">
    <citation type="journal article" date="1996" name="Microbiology">
        <title>Influence of salt on the transcription of the gas-vesicle genes of Haloferax mediterranei and identification of the endogenous transcriptional activator gene.</title>
        <authorList>
            <person name="Roeder R."/>
            <person name="Pfeifer F."/>
        </authorList>
    </citation>
    <scope>INDUCTION BY SALT</scope>
    <source>
        <strain>ATCC 33500 / DSM 1411 / JCM 8866 / NBRC 14739 / NCIMB 2177 / R-4</strain>
    </source>
</reference>
<feature type="chain" id="PRO_0000182686" description="Gas vesicle protein H">
    <location>
        <begin position="1"/>
        <end position="216"/>
    </location>
</feature>
<feature type="region of interest" description="Disordered" evidence="3">
    <location>
        <begin position="1"/>
        <end position="141"/>
    </location>
</feature>
<feature type="compositionally biased region" description="Acidic residues" evidence="3">
    <location>
        <begin position="15"/>
        <end position="25"/>
    </location>
</feature>
<feature type="compositionally biased region" description="Basic and acidic residues" evidence="3">
    <location>
        <begin position="38"/>
        <end position="51"/>
    </location>
</feature>
<feature type="compositionally biased region" description="Basic and acidic residues" evidence="3">
    <location>
        <begin position="73"/>
        <end position="84"/>
    </location>
</feature>
<feature type="compositionally biased region" description="Basic and acidic residues" evidence="3">
    <location>
        <begin position="107"/>
        <end position="141"/>
    </location>
</feature>
<dbReference type="EMBL" id="X64701">
    <property type="protein sequence ID" value="CAA45950.1"/>
    <property type="molecule type" value="Genomic_DNA"/>
</dbReference>
<dbReference type="EMBL" id="CP001868">
    <property type="protein sequence ID" value="AFK19407.1"/>
    <property type="molecule type" value="Genomic_DNA"/>
</dbReference>
<dbReference type="PIR" id="S28121">
    <property type="entry name" value="S28121"/>
</dbReference>
<dbReference type="RefSeq" id="WP_014732347.1">
    <property type="nucleotide sequence ID" value="NC_017941.2"/>
</dbReference>
<dbReference type="SMR" id="Q02233"/>
<dbReference type="STRING" id="523841.HFX_1701"/>
<dbReference type="PaxDb" id="523841-HFX_1701"/>
<dbReference type="GeneID" id="40157056"/>
<dbReference type="KEGG" id="hme:HFX_1701"/>
<dbReference type="eggNOG" id="arCOG09328">
    <property type="taxonomic scope" value="Archaea"/>
</dbReference>
<dbReference type="HOGENOM" id="CLU_1478878_0_0_2"/>
<dbReference type="OrthoDB" id="350991at2157"/>
<dbReference type="Proteomes" id="UP000006469">
    <property type="component" value="Chromosome"/>
</dbReference>
<dbReference type="GO" id="GO:0031411">
    <property type="term" value="C:gas vesicle"/>
    <property type="evidence" value="ECO:0007669"/>
    <property type="project" value="UniProtKB-SubCell"/>
</dbReference>
<dbReference type="InterPro" id="IPR008633">
    <property type="entry name" value="GvpH"/>
</dbReference>
<dbReference type="Pfam" id="PF05455">
    <property type="entry name" value="GvpH"/>
    <property type="match status" value="1"/>
</dbReference>
<accession>Q02233</accession>
<accession>I3R597</accession>
<sequence>MSPNLNGPGGSDDSDRPDEPDDSDRPDESNSTGNPDTPDDRPNKTPDRPSDHPSSLLDQLRAILETLAEIEEDGHRQGHGRIDRGNAQIDYDYEVSFGLGPRSRRGKPSDEPRVEAPRTEGTDSQPEGEKSIHIETRETDDGERVVIADLPGVADDELDVTLDADESALELRTDEGIVGRVPLDQPDVEITDVRLRNQVLEIRLTRTNESNGSESK</sequence>
<evidence type="ECO:0000250" key="1">
    <source>
        <dbReference type="UniProtKB" id="P24372"/>
    </source>
</evidence>
<evidence type="ECO:0000250" key="2">
    <source>
        <dbReference type="UniProtKB" id="Q9HHT6"/>
    </source>
</evidence>
<evidence type="ECO:0000256" key="3">
    <source>
        <dbReference type="SAM" id="MobiDB-lite"/>
    </source>
</evidence>
<evidence type="ECO:0000269" key="4">
    <source>
    </source>
</evidence>
<evidence type="ECO:0000269" key="5">
    <source>
    </source>
</evidence>
<evidence type="ECO:0000303" key="6">
    <source>
    </source>
</evidence>
<evidence type="ECO:0000305" key="7"/>
<keyword id="KW-0304">Gas vesicle</keyword>
<protein>
    <recommendedName>
        <fullName>Gas vesicle protein H</fullName>
        <shortName>GvpH</shortName>
    </recommendedName>
</protein>